<sequence length="364" mass="41684">MSDGKDSLDLSGLGAAVPNAKELSAEDKANLVESIKNTLQGLAARHTDVLESLEPKVRKRVEVLREIQSQHDDLEAKFFEERAALEAKYQKMYEPLYSKRYEIVNGVVEVDGVTKEAADETPAEQKEEKGVPEFWLNAMKNHEILSEEIQERDEEALKYLKDIKWYRISEPKGFKLEFYFDTNPFFKNSVLTKTYHMIDEDEPILEKAIGTEIEWFPGKCLTQKVLKKKPKKGSKNTKPITKTENCESFFNFFSPPQVPDDDEEIDEDTAEQLQNQMEQDYDIGSTIRDKIIPHAVSWFTGEAAQDEDFEGIMDDEDDDDEDDDDDEDEDDEGDDEDDEDEKKGGRVPAGEGQQGERPAECKQQ</sequence>
<feature type="chain" id="PRO_0000423689" description="Nucleosome assembly protein 1;2">
    <location>
        <begin position="1"/>
        <end position="361"/>
    </location>
</feature>
<feature type="propeptide" id="PRO_0000423690" description="Removed in mature form" evidence="2">
    <location>
        <begin position="362"/>
        <end position="364"/>
    </location>
</feature>
<feature type="region of interest" description="Disordered" evidence="4">
    <location>
        <begin position="250"/>
        <end position="269"/>
    </location>
</feature>
<feature type="region of interest" description="Disordered" evidence="4">
    <location>
        <begin position="301"/>
        <end position="364"/>
    </location>
</feature>
<feature type="coiled-coil region" evidence="3">
    <location>
        <begin position="32"/>
        <end position="86"/>
    </location>
</feature>
<feature type="short sequence motif" description="Nuclear export signal" evidence="3">
    <location>
        <begin position="53"/>
        <end position="68"/>
    </location>
</feature>
<feature type="short sequence motif" description="Nuclear localization signal" evidence="3">
    <location>
        <begin position="227"/>
        <end position="232"/>
    </location>
</feature>
<feature type="compositionally biased region" description="Acidic residues" evidence="4">
    <location>
        <begin position="259"/>
        <end position="269"/>
    </location>
</feature>
<feature type="compositionally biased region" description="Acidic residues" evidence="4">
    <location>
        <begin position="304"/>
        <end position="340"/>
    </location>
</feature>
<feature type="modified residue" description="Cysteine methyl ester" evidence="2">
    <location>
        <position position="361"/>
    </location>
</feature>
<feature type="lipid moiety-binding region" description="S-farnesyl cysteine" evidence="2">
    <location>
        <position position="361"/>
    </location>
</feature>
<protein>
    <recommendedName>
        <fullName>Nucleosome assembly protein 1;2</fullName>
        <shortName>OsNAP1;2</shortName>
    </recommendedName>
    <alternativeName>
        <fullName>Nucleosome assembly protein 1-like 2</fullName>
        <shortName>OsNAP1_L2</shortName>
    </alternativeName>
</protein>
<accession>Q53WK4</accession>
<accession>A0A0N7KL59</accession>
<organism>
    <name type="scientific">Oryza sativa subsp. japonica</name>
    <name type="common">Rice</name>
    <dbReference type="NCBI Taxonomy" id="39947"/>
    <lineage>
        <taxon>Eukaryota</taxon>
        <taxon>Viridiplantae</taxon>
        <taxon>Streptophyta</taxon>
        <taxon>Embryophyta</taxon>
        <taxon>Tracheophyta</taxon>
        <taxon>Spermatophyta</taxon>
        <taxon>Magnoliopsida</taxon>
        <taxon>Liliopsida</taxon>
        <taxon>Poales</taxon>
        <taxon>Poaceae</taxon>
        <taxon>BOP clade</taxon>
        <taxon>Oryzoideae</taxon>
        <taxon>Oryzeae</taxon>
        <taxon>Oryzinae</taxon>
        <taxon>Oryza</taxon>
        <taxon>Oryza sativa</taxon>
    </lineage>
</organism>
<dbReference type="EMBL" id="AC119291">
    <property type="protein sequence ID" value="AAV59408.1"/>
    <property type="molecule type" value="Genomic_DNA"/>
</dbReference>
<dbReference type="EMBL" id="AP008211">
    <property type="protein sequence ID" value="BAF18089.1"/>
    <property type="molecule type" value="Genomic_DNA"/>
</dbReference>
<dbReference type="EMBL" id="AP014961">
    <property type="protein sequence ID" value="BAS95105.1"/>
    <property type="molecule type" value="Genomic_DNA"/>
</dbReference>
<dbReference type="EMBL" id="CM000142">
    <property type="protein sequence ID" value="EEE64526.1"/>
    <property type="molecule type" value="Genomic_DNA"/>
</dbReference>
<dbReference type="EMBL" id="AK071120">
    <property type="protein sequence ID" value="BAG92324.1"/>
    <property type="molecule type" value="mRNA"/>
</dbReference>
<dbReference type="RefSeq" id="NP_001407772.1">
    <property type="nucleotide sequence ID" value="NM_001420843.1"/>
</dbReference>
<dbReference type="RefSeq" id="XP_015639209.1">
    <property type="nucleotide sequence ID" value="XM_015783723.1"/>
</dbReference>
<dbReference type="SMR" id="Q53WK4"/>
<dbReference type="FunCoup" id="Q53WK4">
    <property type="interactions" value="2457"/>
</dbReference>
<dbReference type="STRING" id="39947.Q53WK4"/>
<dbReference type="PaxDb" id="39947-Q53WK4"/>
<dbReference type="EnsemblPlants" id="Os05t0539700-01">
    <property type="protein sequence ID" value="Os05t0539700-01"/>
    <property type="gene ID" value="Os05g0539700"/>
</dbReference>
<dbReference type="GeneID" id="4339460"/>
<dbReference type="Gramene" id="Os05t0539700-01">
    <property type="protein sequence ID" value="Os05t0539700-01"/>
    <property type="gene ID" value="Os05g0539700"/>
</dbReference>
<dbReference type="KEGG" id="dosa:Os05g0539700"/>
<dbReference type="eggNOG" id="KOG1507">
    <property type="taxonomic scope" value="Eukaryota"/>
</dbReference>
<dbReference type="HOGENOM" id="CLU_038841_4_0_1"/>
<dbReference type="InParanoid" id="Q53WK4"/>
<dbReference type="OMA" id="YSGDFMY"/>
<dbReference type="OrthoDB" id="27325at2759"/>
<dbReference type="Proteomes" id="UP000000763">
    <property type="component" value="Chromosome 5"/>
</dbReference>
<dbReference type="Proteomes" id="UP000007752">
    <property type="component" value="Chromosome 5"/>
</dbReference>
<dbReference type="Proteomes" id="UP000059680">
    <property type="component" value="Chromosome 5"/>
</dbReference>
<dbReference type="GO" id="GO:0000785">
    <property type="term" value="C:chromatin"/>
    <property type="evidence" value="ECO:0000318"/>
    <property type="project" value="GO_Central"/>
</dbReference>
<dbReference type="GO" id="GO:0005737">
    <property type="term" value="C:cytoplasm"/>
    <property type="evidence" value="ECO:0007669"/>
    <property type="project" value="UniProtKB-SubCell"/>
</dbReference>
<dbReference type="GO" id="GO:0005634">
    <property type="term" value="C:nucleus"/>
    <property type="evidence" value="ECO:0000318"/>
    <property type="project" value="GO_Central"/>
</dbReference>
<dbReference type="GO" id="GO:0003682">
    <property type="term" value="F:chromatin binding"/>
    <property type="evidence" value="ECO:0000318"/>
    <property type="project" value="GO_Central"/>
</dbReference>
<dbReference type="GO" id="GO:0042393">
    <property type="term" value="F:histone binding"/>
    <property type="evidence" value="ECO:0000318"/>
    <property type="project" value="GO_Central"/>
</dbReference>
<dbReference type="GO" id="GO:0000724">
    <property type="term" value="P:double-strand break repair via homologous recombination"/>
    <property type="evidence" value="ECO:0007669"/>
    <property type="project" value="UniProtKB-ARBA"/>
</dbReference>
<dbReference type="GO" id="GO:0006334">
    <property type="term" value="P:nucleosome assembly"/>
    <property type="evidence" value="ECO:0000318"/>
    <property type="project" value="GO_Central"/>
</dbReference>
<dbReference type="FunFam" id="1.20.5.1500:FF:000001">
    <property type="entry name" value="Nucleosome assembly protein 1-like 1"/>
    <property type="match status" value="1"/>
</dbReference>
<dbReference type="FunFam" id="3.30.1120.90:FF:000005">
    <property type="entry name" value="Nucleosome assembly protein11"/>
    <property type="match status" value="1"/>
</dbReference>
<dbReference type="Gene3D" id="1.20.5.1500">
    <property type="match status" value="1"/>
</dbReference>
<dbReference type="Gene3D" id="3.30.1120.90">
    <property type="entry name" value="Nucleosome assembly protein"/>
    <property type="match status" value="1"/>
</dbReference>
<dbReference type="InterPro" id="IPR037231">
    <property type="entry name" value="NAP-like_sf"/>
</dbReference>
<dbReference type="InterPro" id="IPR002164">
    <property type="entry name" value="NAP_family"/>
</dbReference>
<dbReference type="PANTHER" id="PTHR11875">
    <property type="entry name" value="TESTIS-SPECIFIC Y-ENCODED PROTEIN"/>
    <property type="match status" value="1"/>
</dbReference>
<dbReference type="Pfam" id="PF00956">
    <property type="entry name" value="NAP"/>
    <property type="match status" value="1"/>
</dbReference>
<dbReference type="SUPFAM" id="SSF143113">
    <property type="entry name" value="NAP-like"/>
    <property type="match status" value="1"/>
</dbReference>
<proteinExistence type="evidence at transcript level"/>
<evidence type="ECO:0000250" key="1"/>
<evidence type="ECO:0000250" key="2">
    <source>
        <dbReference type="UniProtKB" id="Q9SZI2"/>
    </source>
</evidence>
<evidence type="ECO:0000255" key="3"/>
<evidence type="ECO:0000256" key="4">
    <source>
        <dbReference type="SAM" id="MobiDB-lite"/>
    </source>
</evidence>
<evidence type="ECO:0000305" key="5"/>
<gene>
    <name type="primary">NAP1;2</name>
    <name type="synonym">NAP1_L2</name>
    <name type="ordered locus">Os05g0539700</name>
    <name type="ordered locus">LOC_Os05g46230</name>
    <name type="ORF">OsJ_19377</name>
    <name type="ORF">OSJNBa0052K01.18</name>
</gene>
<reference key="1">
    <citation type="journal article" date="2005" name="Mol. Genet. Genomics">
        <title>A fine physical map of the rice chromosome 5.</title>
        <authorList>
            <person name="Cheng C.-H."/>
            <person name="Chung M.C."/>
            <person name="Liu S.-M."/>
            <person name="Chen S.-K."/>
            <person name="Kao F.Y."/>
            <person name="Lin S.-J."/>
            <person name="Hsiao S.-H."/>
            <person name="Tseng I.C."/>
            <person name="Hsing Y.-I.C."/>
            <person name="Wu H.-P."/>
            <person name="Chen C.-S."/>
            <person name="Shaw J.-F."/>
            <person name="Wu J."/>
            <person name="Matsumoto T."/>
            <person name="Sasaki T."/>
            <person name="Chen H.-C."/>
            <person name="Chow T.-Y."/>
        </authorList>
    </citation>
    <scope>NUCLEOTIDE SEQUENCE [LARGE SCALE GENOMIC DNA]</scope>
    <source>
        <strain>cv. Nipponbare</strain>
    </source>
</reference>
<reference key="2">
    <citation type="journal article" date="2005" name="Nature">
        <title>The map-based sequence of the rice genome.</title>
        <authorList>
            <consortium name="International rice genome sequencing project (IRGSP)"/>
        </authorList>
    </citation>
    <scope>NUCLEOTIDE SEQUENCE [LARGE SCALE GENOMIC DNA]</scope>
    <source>
        <strain>cv. Nipponbare</strain>
    </source>
</reference>
<reference key="3">
    <citation type="journal article" date="2008" name="Nucleic Acids Res.">
        <title>The rice annotation project database (RAP-DB): 2008 update.</title>
        <authorList>
            <consortium name="The rice annotation project (RAP)"/>
        </authorList>
    </citation>
    <scope>GENOME REANNOTATION</scope>
    <source>
        <strain>cv. Nipponbare</strain>
    </source>
</reference>
<reference key="4">
    <citation type="journal article" date="2013" name="Rice">
        <title>Improvement of the Oryza sativa Nipponbare reference genome using next generation sequence and optical map data.</title>
        <authorList>
            <person name="Kawahara Y."/>
            <person name="de la Bastide M."/>
            <person name="Hamilton J.P."/>
            <person name="Kanamori H."/>
            <person name="McCombie W.R."/>
            <person name="Ouyang S."/>
            <person name="Schwartz D.C."/>
            <person name="Tanaka T."/>
            <person name="Wu J."/>
            <person name="Zhou S."/>
            <person name="Childs K.L."/>
            <person name="Davidson R.M."/>
            <person name="Lin H."/>
            <person name="Quesada-Ocampo L."/>
            <person name="Vaillancourt B."/>
            <person name="Sakai H."/>
            <person name="Lee S.S."/>
            <person name="Kim J."/>
            <person name="Numa H."/>
            <person name="Itoh T."/>
            <person name="Buell C.R."/>
            <person name="Matsumoto T."/>
        </authorList>
    </citation>
    <scope>GENOME REANNOTATION</scope>
    <source>
        <strain>cv. Nipponbare</strain>
    </source>
</reference>
<reference key="5">
    <citation type="journal article" date="2005" name="PLoS Biol.">
        <title>The genomes of Oryza sativa: a history of duplications.</title>
        <authorList>
            <person name="Yu J."/>
            <person name="Wang J."/>
            <person name="Lin W."/>
            <person name="Li S."/>
            <person name="Li H."/>
            <person name="Zhou J."/>
            <person name="Ni P."/>
            <person name="Dong W."/>
            <person name="Hu S."/>
            <person name="Zeng C."/>
            <person name="Zhang J."/>
            <person name="Zhang Y."/>
            <person name="Li R."/>
            <person name="Xu Z."/>
            <person name="Li S."/>
            <person name="Li X."/>
            <person name="Zheng H."/>
            <person name="Cong L."/>
            <person name="Lin L."/>
            <person name="Yin J."/>
            <person name="Geng J."/>
            <person name="Li G."/>
            <person name="Shi J."/>
            <person name="Liu J."/>
            <person name="Lv H."/>
            <person name="Li J."/>
            <person name="Wang J."/>
            <person name="Deng Y."/>
            <person name="Ran L."/>
            <person name="Shi X."/>
            <person name="Wang X."/>
            <person name="Wu Q."/>
            <person name="Li C."/>
            <person name="Ren X."/>
            <person name="Wang J."/>
            <person name="Wang X."/>
            <person name="Li D."/>
            <person name="Liu D."/>
            <person name="Zhang X."/>
            <person name="Ji Z."/>
            <person name="Zhao W."/>
            <person name="Sun Y."/>
            <person name="Zhang Z."/>
            <person name="Bao J."/>
            <person name="Han Y."/>
            <person name="Dong L."/>
            <person name="Ji J."/>
            <person name="Chen P."/>
            <person name="Wu S."/>
            <person name="Liu J."/>
            <person name="Xiao Y."/>
            <person name="Bu D."/>
            <person name="Tan J."/>
            <person name="Yang L."/>
            <person name="Ye C."/>
            <person name="Zhang J."/>
            <person name="Xu J."/>
            <person name="Zhou Y."/>
            <person name="Yu Y."/>
            <person name="Zhang B."/>
            <person name="Zhuang S."/>
            <person name="Wei H."/>
            <person name="Liu B."/>
            <person name="Lei M."/>
            <person name="Yu H."/>
            <person name="Li Y."/>
            <person name="Xu H."/>
            <person name="Wei S."/>
            <person name="He X."/>
            <person name="Fang L."/>
            <person name="Zhang Z."/>
            <person name="Zhang Y."/>
            <person name="Huang X."/>
            <person name="Su Z."/>
            <person name="Tong W."/>
            <person name="Li J."/>
            <person name="Tong Z."/>
            <person name="Li S."/>
            <person name="Ye J."/>
            <person name="Wang L."/>
            <person name="Fang L."/>
            <person name="Lei T."/>
            <person name="Chen C.-S."/>
            <person name="Chen H.-C."/>
            <person name="Xu Z."/>
            <person name="Li H."/>
            <person name="Huang H."/>
            <person name="Zhang F."/>
            <person name="Xu H."/>
            <person name="Li N."/>
            <person name="Zhao C."/>
            <person name="Li S."/>
            <person name="Dong L."/>
            <person name="Huang Y."/>
            <person name="Li L."/>
            <person name="Xi Y."/>
            <person name="Qi Q."/>
            <person name="Li W."/>
            <person name="Zhang B."/>
            <person name="Hu W."/>
            <person name="Zhang Y."/>
            <person name="Tian X."/>
            <person name="Jiao Y."/>
            <person name="Liang X."/>
            <person name="Jin J."/>
            <person name="Gao L."/>
            <person name="Zheng W."/>
            <person name="Hao B."/>
            <person name="Liu S.-M."/>
            <person name="Wang W."/>
            <person name="Yuan L."/>
            <person name="Cao M."/>
            <person name="McDermott J."/>
            <person name="Samudrala R."/>
            <person name="Wang J."/>
            <person name="Wong G.K.-S."/>
            <person name="Yang H."/>
        </authorList>
    </citation>
    <scope>NUCLEOTIDE SEQUENCE [LARGE SCALE GENOMIC DNA]</scope>
    <source>
        <strain>cv. Nipponbare</strain>
    </source>
</reference>
<reference key="6">
    <citation type="journal article" date="2003" name="Science">
        <title>Collection, mapping, and annotation of over 28,000 cDNA clones from japonica rice.</title>
        <authorList>
            <consortium name="The rice full-length cDNA consortium"/>
        </authorList>
    </citation>
    <scope>NUCLEOTIDE SEQUENCE [LARGE SCALE MRNA]</scope>
    <source>
        <strain>cv. Nipponbare</strain>
    </source>
</reference>
<comment type="function">
    <text evidence="1">May modulate chromatin structure by regulation of nucleosome assembly/disassembly.</text>
</comment>
<comment type="subcellular location">
    <subcellularLocation>
        <location evidence="1">Nucleus</location>
    </subcellularLocation>
    <subcellularLocation>
        <location evidence="1">Cytoplasm</location>
    </subcellularLocation>
</comment>
<comment type="domain">
    <text>The acidic domain is probably involved in the interaction with histones.</text>
</comment>
<comment type="similarity">
    <text evidence="5">Belongs to the nucleosome assembly protein (NAP) family.</text>
</comment>
<name>NAP1B_ORYSJ</name>
<keyword id="KW-0143">Chaperone</keyword>
<keyword id="KW-0175">Coiled coil</keyword>
<keyword id="KW-0963">Cytoplasm</keyword>
<keyword id="KW-0449">Lipoprotein</keyword>
<keyword id="KW-0488">Methylation</keyword>
<keyword id="KW-0539">Nucleus</keyword>
<keyword id="KW-0636">Prenylation</keyword>
<keyword id="KW-1185">Reference proteome</keyword>